<dbReference type="EMBL" id="CP000644">
    <property type="protein sequence ID" value="ABO92015.1"/>
    <property type="molecule type" value="Genomic_DNA"/>
</dbReference>
<dbReference type="RefSeq" id="WP_005319722.1">
    <property type="nucleotide sequence ID" value="NC_009348.1"/>
</dbReference>
<dbReference type="SMR" id="A4SSZ3"/>
<dbReference type="STRING" id="29491.GCA_000820065_03478"/>
<dbReference type="GeneID" id="97221803"/>
<dbReference type="KEGG" id="asa:ASA_4074"/>
<dbReference type="eggNOG" id="COG0199">
    <property type="taxonomic scope" value="Bacteria"/>
</dbReference>
<dbReference type="HOGENOM" id="CLU_139869_0_1_6"/>
<dbReference type="Proteomes" id="UP000000225">
    <property type="component" value="Chromosome"/>
</dbReference>
<dbReference type="GO" id="GO:0005737">
    <property type="term" value="C:cytoplasm"/>
    <property type="evidence" value="ECO:0007669"/>
    <property type="project" value="UniProtKB-ARBA"/>
</dbReference>
<dbReference type="GO" id="GO:0015935">
    <property type="term" value="C:small ribosomal subunit"/>
    <property type="evidence" value="ECO:0007669"/>
    <property type="project" value="TreeGrafter"/>
</dbReference>
<dbReference type="GO" id="GO:0019843">
    <property type="term" value="F:rRNA binding"/>
    <property type="evidence" value="ECO:0007669"/>
    <property type="project" value="UniProtKB-UniRule"/>
</dbReference>
<dbReference type="GO" id="GO:0003735">
    <property type="term" value="F:structural constituent of ribosome"/>
    <property type="evidence" value="ECO:0007669"/>
    <property type="project" value="InterPro"/>
</dbReference>
<dbReference type="GO" id="GO:0006412">
    <property type="term" value="P:translation"/>
    <property type="evidence" value="ECO:0007669"/>
    <property type="project" value="UniProtKB-UniRule"/>
</dbReference>
<dbReference type="FunFam" id="1.10.287.1480:FF:000001">
    <property type="entry name" value="30S ribosomal protein S14"/>
    <property type="match status" value="1"/>
</dbReference>
<dbReference type="Gene3D" id="1.10.287.1480">
    <property type="match status" value="1"/>
</dbReference>
<dbReference type="HAMAP" id="MF_00537">
    <property type="entry name" value="Ribosomal_uS14_1"/>
    <property type="match status" value="1"/>
</dbReference>
<dbReference type="InterPro" id="IPR001209">
    <property type="entry name" value="Ribosomal_uS14"/>
</dbReference>
<dbReference type="InterPro" id="IPR023036">
    <property type="entry name" value="Ribosomal_uS14_bac/plastid"/>
</dbReference>
<dbReference type="InterPro" id="IPR018271">
    <property type="entry name" value="Ribosomal_uS14_CS"/>
</dbReference>
<dbReference type="NCBIfam" id="NF006477">
    <property type="entry name" value="PRK08881.1"/>
    <property type="match status" value="1"/>
</dbReference>
<dbReference type="PANTHER" id="PTHR19836">
    <property type="entry name" value="30S RIBOSOMAL PROTEIN S14"/>
    <property type="match status" value="1"/>
</dbReference>
<dbReference type="PANTHER" id="PTHR19836:SF19">
    <property type="entry name" value="SMALL RIBOSOMAL SUBUNIT PROTEIN US14M"/>
    <property type="match status" value="1"/>
</dbReference>
<dbReference type="Pfam" id="PF00253">
    <property type="entry name" value="Ribosomal_S14"/>
    <property type="match status" value="1"/>
</dbReference>
<dbReference type="SUPFAM" id="SSF57716">
    <property type="entry name" value="Glucocorticoid receptor-like (DNA-binding domain)"/>
    <property type="match status" value="1"/>
</dbReference>
<dbReference type="PROSITE" id="PS00527">
    <property type="entry name" value="RIBOSOMAL_S14"/>
    <property type="match status" value="1"/>
</dbReference>
<evidence type="ECO:0000255" key="1">
    <source>
        <dbReference type="HAMAP-Rule" id="MF_00537"/>
    </source>
</evidence>
<evidence type="ECO:0000305" key="2"/>
<feature type="chain" id="PRO_1000128287" description="Small ribosomal subunit protein uS14">
    <location>
        <begin position="1"/>
        <end position="101"/>
    </location>
</feature>
<protein>
    <recommendedName>
        <fullName evidence="1">Small ribosomal subunit protein uS14</fullName>
    </recommendedName>
    <alternativeName>
        <fullName evidence="2">30S ribosomal protein S14</fullName>
    </alternativeName>
</protein>
<comment type="function">
    <text evidence="1">Binds 16S rRNA, required for the assembly of 30S particles and may also be responsible for determining the conformation of the 16S rRNA at the A site.</text>
</comment>
<comment type="subunit">
    <text evidence="1">Part of the 30S ribosomal subunit. Contacts proteins S3 and S10.</text>
</comment>
<comment type="similarity">
    <text evidence="1">Belongs to the universal ribosomal protein uS14 family.</text>
</comment>
<reference key="1">
    <citation type="journal article" date="2008" name="BMC Genomics">
        <title>The genome of Aeromonas salmonicida subsp. salmonicida A449: insights into the evolution of a fish pathogen.</title>
        <authorList>
            <person name="Reith M.E."/>
            <person name="Singh R.K."/>
            <person name="Curtis B."/>
            <person name="Boyd J.M."/>
            <person name="Bouevitch A."/>
            <person name="Kimball J."/>
            <person name="Munholland J."/>
            <person name="Murphy C."/>
            <person name="Sarty D."/>
            <person name="Williams J."/>
            <person name="Nash J.H."/>
            <person name="Johnson S.C."/>
            <person name="Brown L.L."/>
        </authorList>
    </citation>
    <scope>NUCLEOTIDE SEQUENCE [LARGE SCALE GENOMIC DNA]</scope>
    <source>
        <strain>A449</strain>
    </source>
</reference>
<keyword id="KW-0687">Ribonucleoprotein</keyword>
<keyword id="KW-0689">Ribosomal protein</keyword>
<keyword id="KW-0694">RNA-binding</keyword>
<keyword id="KW-0699">rRNA-binding</keyword>
<sequence>MAKTSMKAREAKRAKLVAKFATKRTELKAIIVDMNASEEARWDAVLQLQQLPRDSSPSRQRNRCNITGRPHGFLRKFGLSRIKVREHAMKGEIPGLKKASW</sequence>
<organism>
    <name type="scientific">Aeromonas salmonicida (strain A449)</name>
    <dbReference type="NCBI Taxonomy" id="382245"/>
    <lineage>
        <taxon>Bacteria</taxon>
        <taxon>Pseudomonadati</taxon>
        <taxon>Pseudomonadota</taxon>
        <taxon>Gammaproteobacteria</taxon>
        <taxon>Aeromonadales</taxon>
        <taxon>Aeromonadaceae</taxon>
        <taxon>Aeromonas</taxon>
    </lineage>
</organism>
<name>RS14_AERS4</name>
<proteinExistence type="inferred from homology"/>
<accession>A4SSZ3</accession>
<gene>
    <name evidence="1" type="primary">rpsN</name>
    <name type="ordered locus">ASA_4074</name>
</gene>